<name>THIE_PSEPG</name>
<reference key="1">
    <citation type="submission" date="2008-01" db="EMBL/GenBank/DDBJ databases">
        <title>Complete sequence of Pseudomonas putida GB-1.</title>
        <authorList>
            <consortium name="US DOE Joint Genome Institute"/>
            <person name="Copeland A."/>
            <person name="Lucas S."/>
            <person name="Lapidus A."/>
            <person name="Barry K."/>
            <person name="Glavina del Rio T."/>
            <person name="Dalin E."/>
            <person name="Tice H."/>
            <person name="Pitluck S."/>
            <person name="Bruce D."/>
            <person name="Goodwin L."/>
            <person name="Chertkov O."/>
            <person name="Brettin T."/>
            <person name="Detter J.C."/>
            <person name="Han C."/>
            <person name="Kuske C.R."/>
            <person name="Schmutz J."/>
            <person name="Larimer F."/>
            <person name="Land M."/>
            <person name="Hauser L."/>
            <person name="Kyrpides N."/>
            <person name="Kim E."/>
            <person name="McCarthy J.K."/>
            <person name="Richardson P."/>
        </authorList>
    </citation>
    <scope>NUCLEOTIDE SEQUENCE [LARGE SCALE GENOMIC DNA]</scope>
    <source>
        <strain>GB-1</strain>
    </source>
</reference>
<comment type="function">
    <text evidence="1">Condenses 4-methyl-5-(beta-hydroxyethyl)thiazole monophosphate (THZ-P) and 2-methyl-4-amino-5-hydroxymethyl pyrimidine pyrophosphate (HMP-PP) to form thiamine monophosphate (TMP).</text>
</comment>
<comment type="catalytic activity">
    <reaction evidence="1">
        <text>2-[(2R,5Z)-2-carboxy-4-methylthiazol-5(2H)-ylidene]ethyl phosphate + 4-amino-2-methyl-5-(diphosphooxymethyl)pyrimidine + 2 H(+) = thiamine phosphate + CO2 + diphosphate</text>
        <dbReference type="Rhea" id="RHEA:47844"/>
        <dbReference type="ChEBI" id="CHEBI:15378"/>
        <dbReference type="ChEBI" id="CHEBI:16526"/>
        <dbReference type="ChEBI" id="CHEBI:33019"/>
        <dbReference type="ChEBI" id="CHEBI:37575"/>
        <dbReference type="ChEBI" id="CHEBI:57841"/>
        <dbReference type="ChEBI" id="CHEBI:62899"/>
        <dbReference type="EC" id="2.5.1.3"/>
    </reaction>
</comment>
<comment type="catalytic activity">
    <reaction evidence="1">
        <text>2-(2-carboxy-4-methylthiazol-5-yl)ethyl phosphate + 4-amino-2-methyl-5-(diphosphooxymethyl)pyrimidine + 2 H(+) = thiamine phosphate + CO2 + diphosphate</text>
        <dbReference type="Rhea" id="RHEA:47848"/>
        <dbReference type="ChEBI" id="CHEBI:15378"/>
        <dbReference type="ChEBI" id="CHEBI:16526"/>
        <dbReference type="ChEBI" id="CHEBI:33019"/>
        <dbReference type="ChEBI" id="CHEBI:37575"/>
        <dbReference type="ChEBI" id="CHEBI:57841"/>
        <dbReference type="ChEBI" id="CHEBI:62890"/>
        <dbReference type="EC" id="2.5.1.3"/>
    </reaction>
</comment>
<comment type="catalytic activity">
    <reaction evidence="1">
        <text>4-methyl-5-(2-phosphooxyethyl)-thiazole + 4-amino-2-methyl-5-(diphosphooxymethyl)pyrimidine + H(+) = thiamine phosphate + diphosphate</text>
        <dbReference type="Rhea" id="RHEA:22328"/>
        <dbReference type="ChEBI" id="CHEBI:15378"/>
        <dbReference type="ChEBI" id="CHEBI:33019"/>
        <dbReference type="ChEBI" id="CHEBI:37575"/>
        <dbReference type="ChEBI" id="CHEBI:57841"/>
        <dbReference type="ChEBI" id="CHEBI:58296"/>
        <dbReference type="EC" id="2.5.1.3"/>
    </reaction>
</comment>
<comment type="cofactor">
    <cofactor evidence="1">
        <name>Mg(2+)</name>
        <dbReference type="ChEBI" id="CHEBI:18420"/>
    </cofactor>
    <text evidence="1">Binds 1 Mg(2+) ion per subunit.</text>
</comment>
<comment type="pathway">
    <text evidence="1">Cofactor biosynthesis; thiamine diphosphate biosynthesis; thiamine phosphate from 4-amino-2-methyl-5-diphosphomethylpyrimidine and 4-methyl-5-(2-phosphoethyl)-thiazole: step 1/1.</text>
</comment>
<comment type="similarity">
    <text evidence="1">Belongs to the thiamine-phosphate synthase family.</text>
</comment>
<protein>
    <recommendedName>
        <fullName evidence="1">Thiamine-phosphate synthase</fullName>
        <shortName evidence="1">TP synthase</shortName>
        <shortName evidence="1">TPS</shortName>
        <ecNumber evidence="1">2.5.1.3</ecNumber>
    </recommendedName>
    <alternativeName>
        <fullName evidence="1">Thiamine-phosphate pyrophosphorylase</fullName>
        <shortName evidence="1">TMP pyrophosphorylase</shortName>
        <shortName evidence="1">TMP-PPase</shortName>
    </alternativeName>
</protein>
<proteinExistence type="inferred from homology"/>
<organism>
    <name type="scientific">Pseudomonas putida (strain GB-1)</name>
    <dbReference type="NCBI Taxonomy" id="76869"/>
    <lineage>
        <taxon>Bacteria</taxon>
        <taxon>Pseudomonadati</taxon>
        <taxon>Pseudomonadota</taxon>
        <taxon>Gammaproteobacteria</taxon>
        <taxon>Pseudomonadales</taxon>
        <taxon>Pseudomonadaceae</taxon>
        <taxon>Pseudomonas</taxon>
    </lineage>
</organism>
<feature type="chain" id="PRO_1000075574" description="Thiamine-phosphate synthase">
    <location>
        <begin position="1"/>
        <end position="207"/>
    </location>
</feature>
<feature type="binding site" evidence="1">
    <location>
        <begin position="35"/>
        <end position="39"/>
    </location>
    <ligand>
        <name>4-amino-2-methyl-5-(diphosphooxymethyl)pyrimidine</name>
        <dbReference type="ChEBI" id="CHEBI:57841"/>
    </ligand>
</feature>
<feature type="binding site" evidence="1">
    <location>
        <position position="67"/>
    </location>
    <ligand>
        <name>4-amino-2-methyl-5-(diphosphooxymethyl)pyrimidine</name>
        <dbReference type="ChEBI" id="CHEBI:57841"/>
    </ligand>
</feature>
<feature type="binding site" evidence="1">
    <location>
        <position position="68"/>
    </location>
    <ligand>
        <name>Mg(2+)</name>
        <dbReference type="ChEBI" id="CHEBI:18420"/>
    </ligand>
</feature>
<feature type="binding site" evidence="1">
    <location>
        <position position="86"/>
    </location>
    <ligand>
        <name>Mg(2+)</name>
        <dbReference type="ChEBI" id="CHEBI:18420"/>
    </ligand>
</feature>
<feature type="binding site" evidence="1">
    <location>
        <position position="105"/>
    </location>
    <ligand>
        <name>4-amino-2-methyl-5-(diphosphooxymethyl)pyrimidine</name>
        <dbReference type="ChEBI" id="CHEBI:57841"/>
    </ligand>
</feature>
<feature type="binding site" evidence="1">
    <location>
        <begin position="132"/>
        <end position="134"/>
    </location>
    <ligand>
        <name>2-[(2R,5Z)-2-carboxy-4-methylthiazol-5(2H)-ylidene]ethyl phosphate</name>
        <dbReference type="ChEBI" id="CHEBI:62899"/>
    </ligand>
</feature>
<feature type="binding site" evidence="1">
    <location>
        <position position="135"/>
    </location>
    <ligand>
        <name>4-amino-2-methyl-5-(diphosphooxymethyl)pyrimidine</name>
        <dbReference type="ChEBI" id="CHEBI:57841"/>
    </ligand>
</feature>
<feature type="binding site" evidence="1">
    <location>
        <position position="162"/>
    </location>
    <ligand>
        <name>2-[(2R,5Z)-2-carboxy-4-methylthiazol-5(2H)-ylidene]ethyl phosphate</name>
        <dbReference type="ChEBI" id="CHEBI:62899"/>
    </ligand>
</feature>
<dbReference type="EC" id="2.5.1.3" evidence="1"/>
<dbReference type="EMBL" id="CP000926">
    <property type="protein sequence ID" value="ABZ00722.1"/>
    <property type="molecule type" value="Genomic_DNA"/>
</dbReference>
<dbReference type="RefSeq" id="WP_012274356.1">
    <property type="nucleotide sequence ID" value="NC_010322.1"/>
</dbReference>
<dbReference type="SMR" id="B0KJV8"/>
<dbReference type="KEGG" id="ppg:PputGB1_4837"/>
<dbReference type="eggNOG" id="COG0352">
    <property type="taxonomic scope" value="Bacteria"/>
</dbReference>
<dbReference type="HOGENOM" id="CLU_018272_3_1_6"/>
<dbReference type="UniPathway" id="UPA00060">
    <property type="reaction ID" value="UER00141"/>
</dbReference>
<dbReference type="Proteomes" id="UP000002157">
    <property type="component" value="Chromosome"/>
</dbReference>
<dbReference type="GO" id="GO:0005737">
    <property type="term" value="C:cytoplasm"/>
    <property type="evidence" value="ECO:0007669"/>
    <property type="project" value="TreeGrafter"/>
</dbReference>
<dbReference type="GO" id="GO:0000287">
    <property type="term" value="F:magnesium ion binding"/>
    <property type="evidence" value="ECO:0007669"/>
    <property type="project" value="UniProtKB-UniRule"/>
</dbReference>
<dbReference type="GO" id="GO:0004789">
    <property type="term" value="F:thiamine-phosphate diphosphorylase activity"/>
    <property type="evidence" value="ECO:0007669"/>
    <property type="project" value="UniProtKB-UniRule"/>
</dbReference>
<dbReference type="GO" id="GO:0009228">
    <property type="term" value="P:thiamine biosynthetic process"/>
    <property type="evidence" value="ECO:0007669"/>
    <property type="project" value="UniProtKB-KW"/>
</dbReference>
<dbReference type="GO" id="GO:0009229">
    <property type="term" value="P:thiamine diphosphate biosynthetic process"/>
    <property type="evidence" value="ECO:0007669"/>
    <property type="project" value="UniProtKB-UniRule"/>
</dbReference>
<dbReference type="CDD" id="cd00564">
    <property type="entry name" value="TMP_TenI"/>
    <property type="match status" value="1"/>
</dbReference>
<dbReference type="Gene3D" id="3.20.20.70">
    <property type="entry name" value="Aldolase class I"/>
    <property type="match status" value="1"/>
</dbReference>
<dbReference type="HAMAP" id="MF_00097">
    <property type="entry name" value="TMP_synthase"/>
    <property type="match status" value="1"/>
</dbReference>
<dbReference type="InterPro" id="IPR013785">
    <property type="entry name" value="Aldolase_TIM"/>
</dbReference>
<dbReference type="InterPro" id="IPR036206">
    <property type="entry name" value="ThiamineP_synth_sf"/>
</dbReference>
<dbReference type="InterPro" id="IPR022998">
    <property type="entry name" value="ThiamineP_synth_TenI"/>
</dbReference>
<dbReference type="InterPro" id="IPR034291">
    <property type="entry name" value="TMP_synthase"/>
</dbReference>
<dbReference type="NCBIfam" id="TIGR00693">
    <property type="entry name" value="thiE"/>
    <property type="match status" value="1"/>
</dbReference>
<dbReference type="PANTHER" id="PTHR20857">
    <property type="entry name" value="THIAMINE-PHOSPHATE PYROPHOSPHORYLASE"/>
    <property type="match status" value="1"/>
</dbReference>
<dbReference type="PANTHER" id="PTHR20857:SF15">
    <property type="entry name" value="THIAMINE-PHOSPHATE SYNTHASE"/>
    <property type="match status" value="1"/>
</dbReference>
<dbReference type="Pfam" id="PF02581">
    <property type="entry name" value="TMP-TENI"/>
    <property type="match status" value="1"/>
</dbReference>
<dbReference type="SUPFAM" id="SSF51391">
    <property type="entry name" value="Thiamin phosphate synthase"/>
    <property type="match status" value="1"/>
</dbReference>
<evidence type="ECO:0000255" key="1">
    <source>
        <dbReference type="HAMAP-Rule" id="MF_00097"/>
    </source>
</evidence>
<sequence>MKLRGLYAITDSQLLAGRFLSHVEAALDGGVCLLQYRDKSDDAARRLREAEGLMKLCERYGTQLLINDDAELAARLGVGVHLGQTDGPLTPARTLLGRQAIIGSTCHASLELAAQAASEGASYVAFGRFFNSVTKPGAPAANVDLLEQARAQVKLPIAVIGGITLDNAAPLVAHGADLLAVIHGLFGADSAQEVTRRARAFNALFAS</sequence>
<accession>B0KJV8</accession>
<keyword id="KW-0460">Magnesium</keyword>
<keyword id="KW-0479">Metal-binding</keyword>
<keyword id="KW-0784">Thiamine biosynthesis</keyword>
<keyword id="KW-0808">Transferase</keyword>
<gene>
    <name evidence="1" type="primary">thiE</name>
    <name type="ordered locus">PputGB1_4837</name>
</gene>